<reference key="1">
    <citation type="journal article" date="2011" name="J. Bacteriol.">
        <title>Comparative genomics of 28 Salmonella enterica isolates: evidence for CRISPR-mediated adaptive sublineage evolution.</title>
        <authorList>
            <person name="Fricke W.F."/>
            <person name="Mammel M.K."/>
            <person name="McDermott P.F."/>
            <person name="Tartera C."/>
            <person name="White D.G."/>
            <person name="Leclerc J.E."/>
            <person name="Ravel J."/>
            <person name="Cebula T.A."/>
        </authorList>
    </citation>
    <scope>NUCLEOTIDE SEQUENCE [LARGE SCALE GENOMIC DNA]</scope>
    <source>
        <strain>CVM19633</strain>
    </source>
</reference>
<comment type="catalytic activity">
    <reaction evidence="1">
        <text>2-formamido-N(1)-(5-O-phospho-beta-D-ribosyl)acetamidine + ATP = 5-amino-1-(5-phospho-beta-D-ribosyl)imidazole + ADP + phosphate + H(+)</text>
        <dbReference type="Rhea" id="RHEA:23032"/>
        <dbReference type="ChEBI" id="CHEBI:15378"/>
        <dbReference type="ChEBI" id="CHEBI:30616"/>
        <dbReference type="ChEBI" id="CHEBI:43474"/>
        <dbReference type="ChEBI" id="CHEBI:137981"/>
        <dbReference type="ChEBI" id="CHEBI:147287"/>
        <dbReference type="ChEBI" id="CHEBI:456216"/>
        <dbReference type="EC" id="6.3.3.1"/>
    </reaction>
</comment>
<comment type="pathway">
    <text evidence="1">Purine metabolism; IMP biosynthesis via de novo pathway; 5-amino-1-(5-phospho-D-ribosyl)imidazole from N(2)-formyl-N(1)-(5-phospho-D-ribosyl)glycinamide: step 2/2.</text>
</comment>
<comment type="subcellular location">
    <subcellularLocation>
        <location evidence="1">Cytoplasm</location>
    </subcellularLocation>
</comment>
<comment type="similarity">
    <text evidence="1">Belongs to the AIR synthase family.</text>
</comment>
<accession>B4TR76</accession>
<protein>
    <recommendedName>
        <fullName evidence="1">Phosphoribosylformylglycinamidine cyclo-ligase</fullName>
        <ecNumber evidence="1">6.3.3.1</ecNumber>
    </recommendedName>
    <alternativeName>
        <fullName evidence="1">AIR synthase</fullName>
    </alternativeName>
    <alternativeName>
        <fullName evidence="1">AIRS</fullName>
    </alternativeName>
    <alternativeName>
        <fullName evidence="1">Phosphoribosyl-aminoimidazole synthetase</fullName>
    </alternativeName>
</protein>
<organism>
    <name type="scientific">Salmonella schwarzengrund (strain CVM19633)</name>
    <dbReference type="NCBI Taxonomy" id="439843"/>
    <lineage>
        <taxon>Bacteria</taxon>
        <taxon>Pseudomonadati</taxon>
        <taxon>Pseudomonadota</taxon>
        <taxon>Gammaproteobacteria</taxon>
        <taxon>Enterobacterales</taxon>
        <taxon>Enterobacteriaceae</taxon>
        <taxon>Salmonella</taxon>
    </lineage>
</organism>
<evidence type="ECO:0000255" key="1">
    <source>
        <dbReference type="HAMAP-Rule" id="MF_00741"/>
    </source>
</evidence>
<name>PUR5_SALSV</name>
<keyword id="KW-0067">ATP-binding</keyword>
<keyword id="KW-0963">Cytoplasm</keyword>
<keyword id="KW-0436">Ligase</keyword>
<keyword id="KW-0547">Nucleotide-binding</keyword>
<keyword id="KW-0658">Purine biosynthesis</keyword>
<proteinExistence type="inferred from homology"/>
<dbReference type="EC" id="6.3.3.1" evidence="1"/>
<dbReference type="EMBL" id="CP001127">
    <property type="protein sequence ID" value="ACF92847.1"/>
    <property type="molecule type" value="Genomic_DNA"/>
</dbReference>
<dbReference type="RefSeq" id="WP_000130477.1">
    <property type="nucleotide sequence ID" value="NC_011094.1"/>
</dbReference>
<dbReference type="SMR" id="B4TR76"/>
<dbReference type="KEGG" id="sew:SeSA_A2737"/>
<dbReference type="HOGENOM" id="CLU_047116_0_0_6"/>
<dbReference type="UniPathway" id="UPA00074">
    <property type="reaction ID" value="UER00129"/>
</dbReference>
<dbReference type="Proteomes" id="UP000001865">
    <property type="component" value="Chromosome"/>
</dbReference>
<dbReference type="GO" id="GO:0005829">
    <property type="term" value="C:cytosol"/>
    <property type="evidence" value="ECO:0007669"/>
    <property type="project" value="TreeGrafter"/>
</dbReference>
<dbReference type="GO" id="GO:0005524">
    <property type="term" value="F:ATP binding"/>
    <property type="evidence" value="ECO:0007669"/>
    <property type="project" value="UniProtKB-KW"/>
</dbReference>
<dbReference type="GO" id="GO:0004637">
    <property type="term" value="F:phosphoribosylamine-glycine ligase activity"/>
    <property type="evidence" value="ECO:0007669"/>
    <property type="project" value="TreeGrafter"/>
</dbReference>
<dbReference type="GO" id="GO:0004641">
    <property type="term" value="F:phosphoribosylformylglycinamidine cyclo-ligase activity"/>
    <property type="evidence" value="ECO:0007669"/>
    <property type="project" value="UniProtKB-UniRule"/>
</dbReference>
<dbReference type="GO" id="GO:0006189">
    <property type="term" value="P:'de novo' IMP biosynthetic process"/>
    <property type="evidence" value="ECO:0007669"/>
    <property type="project" value="UniProtKB-UniRule"/>
</dbReference>
<dbReference type="GO" id="GO:0046084">
    <property type="term" value="P:adenine biosynthetic process"/>
    <property type="evidence" value="ECO:0007669"/>
    <property type="project" value="TreeGrafter"/>
</dbReference>
<dbReference type="CDD" id="cd02196">
    <property type="entry name" value="PurM"/>
    <property type="match status" value="1"/>
</dbReference>
<dbReference type="FunFam" id="3.30.1330.10:FF:000001">
    <property type="entry name" value="Phosphoribosylformylglycinamidine cyclo-ligase"/>
    <property type="match status" value="1"/>
</dbReference>
<dbReference type="FunFam" id="3.90.650.10:FF:000001">
    <property type="entry name" value="Phosphoribosylformylglycinamidine cyclo-ligase"/>
    <property type="match status" value="1"/>
</dbReference>
<dbReference type="Gene3D" id="3.90.650.10">
    <property type="entry name" value="PurM-like C-terminal domain"/>
    <property type="match status" value="1"/>
</dbReference>
<dbReference type="Gene3D" id="3.30.1330.10">
    <property type="entry name" value="PurM-like, N-terminal domain"/>
    <property type="match status" value="1"/>
</dbReference>
<dbReference type="HAMAP" id="MF_00741">
    <property type="entry name" value="AIRS"/>
    <property type="match status" value="1"/>
</dbReference>
<dbReference type="InterPro" id="IPR010918">
    <property type="entry name" value="PurM-like_C_dom"/>
</dbReference>
<dbReference type="InterPro" id="IPR036676">
    <property type="entry name" value="PurM-like_C_sf"/>
</dbReference>
<dbReference type="InterPro" id="IPR016188">
    <property type="entry name" value="PurM-like_N"/>
</dbReference>
<dbReference type="InterPro" id="IPR036921">
    <property type="entry name" value="PurM-like_N_sf"/>
</dbReference>
<dbReference type="InterPro" id="IPR004733">
    <property type="entry name" value="PurM_cligase"/>
</dbReference>
<dbReference type="NCBIfam" id="TIGR00878">
    <property type="entry name" value="purM"/>
    <property type="match status" value="1"/>
</dbReference>
<dbReference type="PANTHER" id="PTHR10520:SF12">
    <property type="entry name" value="TRIFUNCTIONAL PURINE BIOSYNTHETIC PROTEIN ADENOSINE-3"/>
    <property type="match status" value="1"/>
</dbReference>
<dbReference type="PANTHER" id="PTHR10520">
    <property type="entry name" value="TRIFUNCTIONAL PURINE BIOSYNTHETIC PROTEIN ADENOSINE-3-RELATED"/>
    <property type="match status" value="1"/>
</dbReference>
<dbReference type="Pfam" id="PF00586">
    <property type="entry name" value="AIRS"/>
    <property type="match status" value="1"/>
</dbReference>
<dbReference type="Pfam" id="PF02769">
    <property type="entry name" value="AIRS_C"/>
    <property type="match status" value="1"/>
</dbReference>
<dbReference type="SUPFAM" id="SSF56042">
    <property type="entry name" value="PurM C-terminal domain-like"/>
    <property type="match status" value="1"/>
</dbReference>
<dbReference type="SUPFAM" id="SSF55326">
    <property type="entry name" value="PurM N-terminal domain-like"/>
    <property type="match status" value="1"/>
</dbReference>
<sequence>MTDKTSLSYKDAGVDIDAGNALVDRIKGVVKKTRRPEVMGGLGGFGALCALPQKYREPVLVSGTDGVGTKLRLAMDLKRHDAIGIDLVAMCVNDLVVQGAEPLFFLDYYATGKLDVDTAASVINGIAEGCLQSGCALVGGETAEMPGMYHGEDYDVAGFCVGVVEKSEIIDGSRVAEGDVLIALGSSGPHSNGYSLVRKIIDVSGCDPQTTLLEGKPLADHLLEPTRIYVKSVLELIENVDVHAIAHLTGGGFWENIPRVLPENTQAVINESSWQWPAIFTWLQTAGNVSRHEMYRTFNCGVGMVIALSAPEADKALALLNEKGENAWKIGIIKASDSEQRVVIE</sequence>
<feature type="chain" id="PRO_1000193042" description="Phosphoribosylformylglycinamidine cyclo-ligase">
    <location>
        <begin position="1"/>
        <end position="345"/>
    </location>
</feature>
<gene>
    <name evidence="1" type="primary">purM</name>
    <name type="ordered locus">SeSA_A2737</name>
</gene>